<gene>
    <name evidence="1" type="primary">uppP</name>
    <name type="ordered locus">ETA_04210</name>
</gene>
<reference key="1">
    <citation type="journal article" date="2008" name="Environ. Microbiol.">
        <title>The genome of Erwinia tasmaniensis strain Et1/99, a non-pathogenic bacterium in the genus Erwinia.</title>
        <authorList>
            <person name="Kube M."/>
            <person name="Migdoll A.M."/>
            <person name="Mueller I."/>
            <person name="Kuhl H."/>
            <person name="Beck A."/>
            <person name="Reinhardt R."/>
            <person name="Geider K."/>
        </authorList>
    </citation>
    <scope>NUCLEOTIDE SEQUENCE [LARGE SCALE GENOMIC DNA]</scope>
    <source>
        <strain>DSM 17950 / CFBP 7177 / CIP 109463 / NCPPB 4357 / Et1/99</strain>
    </source>
</reference>
<protein>
    <recommendedName>
        <fullName evidence="1">Undecaprenyl-diphosphatase</fullName>
        <ecNumber evidence="1">3.6.1.27</ecNumber>
    </recommendedName>
    <alternativeName>
        <fullName evidence="1">Bacitracin resistance protein</fullName>
    </alternativeName>
    <alternativeName>
        <fullName evidence="1">Undecaprenyl pyrophosphate phosphatase</fullName>
    </alternativeName>
</protein>
<dbReference type="EC" id="3.6.1.27" evidence="1"/>
<dbReference type="EMBL" id="CU468135">
    <property type="protein sequence ID" value="CAO95467.1"/>
    <property type="molecule type" value="Genomic_DNA"/>
</dbReference>
<dbReference type="RefSeq" id="WP_012440178.1">
    <property type="nucleotide sequence ID" value="NC_010694.1"/>
</dbReference>
<dbReference type="SMR" id="B2VGJ3"/>
<dbReference type="STRING" id="465817.ETA_04210"/>
<dbReference type="KEGG" id="eta:ETA_04210"/>
<dbReference type="eggNOG" id="COG1968">
    <property type="taxonomic scope" value="Bacteria"/>
</dbReference>
<dbReference type="HOGENOM" id="CLU_060296_2_0_6"/>
<dbReference type="OrthoDB" id="9808289at2"/>
<dbReference type="Proteomes" id="UP000001726">
    <property type="component" value="Chromosome"/>
</dbReference>
<dbReference type="GO" id="GO:0005886">
    <property type="term" value="C:plasma membrane"/>
    <property type="evidence" value="ECO:0007669"/>
    <property type="project" value="UniProtKB-SubCell"/>
</dbReference>
<dbReference type="GO" id="GO:0050380">
    <property type="term" value="F:undecaprenyl-diphosphatase activity"/>
    <property type="evidence" value="ECO:0007669"/>
    <property type="project" value="UniProtKB-UniRule"/>
</dbReference>
<dbReference type="GO" id="GO:0071555">
    <property type="term" value="P:cell wall organization"/>
    <property type="evidence" value="ECO:0007669"/>
    <property type="project" value="UniProtKB-KW"/>
</dbReference>
<dbReference type="GO" id="GO:0009252">
    <property type="term" value="P:peptidoglycan biosynthetic process"/>
    <property type="evidence" value="ECO:0007669"/>
    <property type="project" value="UniProtKB-KW"/>
</dbReference>
<dbReference type="GO" id="GO:0008360">
    <property type="term" value="P:regulation of cell shape"/>
    <property type="evidence" value="ECO:0007669"/>
    <property type="project" value="UniProtKB-KW"/>
</dbReference>
<dbReference type="GO" id="GO:0046677">
    <property type="term" value="P:response to antibiotic"/>
    <property type="evidence" value="ECO:0007669"/>
    <property type="project" value="UniProtKB-UniRule"/>
</dbReference>
<dbReference type="HAMAP" id="MF_01006">
    <property type="entry name" value="Undec_diphosphatase"/>
    <property type="match status" value="1"/>
</dbReference>
<dbReference type="InterPro" id="IPR003824">
    <property type="entry name" value="UppP"/>
</dbReference>
<dbReference type="NCBIfam" id="NF001388">
    <property type="entry name" value="PRK00281.1-1"/>
    <property type="match status" value="1"/>
</dbReference>
<dbReference type="NCBIfam" id="NF001389">
    <property type="entry name" value="PRK00281.1-2"/>
    <property type="match status" value="1"/>
</dbReference>
<dbReference type="NCBIfam" id="NF001390">
    <property type="entry name" value="PRK00281.1-4"/>
    <property type="match status" value="1"/>
</dbReference>
<dbReference type="NCBIfam" id="TIGR00753">
    <property type="entry name" value="undec_PP_bacA"/>
    <property type="match status" value="1"/>
</dbReference>
<dbReference type="PANTHER" id="PTHR30622">
    <property type="entry name" value="UNDECAPRENYL-DIPHOSPHATASE"/>
    <property type="match status" value="1"/>
</dbReference>
<dbReference type="PANTHER" id="PTHR30622:SF3">
    <property type="entry name" value="UNDECAPRENYL-DIPHOSPHATASE"/>
    <property type="match status" value="1"/>
</dbReference>
<dbReference type="Pfam" id="PF02673">
    <property type="entry name" value="BacA"/>
    <property type="match status" value="1"/>
</dbReference>
<name>UPPP_ERWT9</name>
<feature type="chain" id="PRO_1000197364" description="Undecaprenyl-diphosphatase">
    <location>
        <begin position="1"/>
        <end position="273"/>
    </location>
</feature>
<feature type="transmembrane region" description="Helical" evidence="1">
    <location>
        <begin position="7"/>
        <end position="27"/>
    </location>
</feature>
<feature type="transmembrane region" description="Helical" evidence="1">
    <location>
        <begin position="45"/>
        <end position="65"/>
    </location>
</feature>
<feature type="transmembrane region" description="Helical" evidence="1">
    <location>
        <begin position="89"/>
        <end position="109"/>
    </location>
</feature>
<feature type="transmembrane region" description="Helical" evidence="1">
    <location>
        <begin position="115"/>
        <end position="135"/>
    </location>
</feature>
<feature type="transmembrane region" description="Helical" evidence="1">
    <location>
        <begin position="152"/>
        <end position="171"/>
    </location>
</feature>
<feature type="transmembrane region" description="Helical" evidence="1">
    <location>
        <begin position="189"/>
        <end position="209"/>
    </location>
</feature>
<feature type="transmembrane region" description="Helical" evidence="1">
    <location>
        <begin position="221"/>
        <end position="241"/>
    </location>
</feature>
<feature type="transmembrane region" description="Helical" evidence="1">
    <location>
        <begin position="253"/>
        <end position="273"/>
    </location>
</feature>
<accession>B2VGJ3</accession>
<comment type="function">
    <text evidence="1">Catalyzes the dephosphorylation of undecaprenyl diphosphate (UPP). Confers resistance to bacitracin.</text>
</comment>
<comment type="catalytic activity">
    <reaction evidence="1">
        <text>di-trans,octa-cis-undecaprenyl diphosphate + H2O = di-trans,octa-cis-undecaprenyl phosphate + phosphate + H(+)</text>
        <dbReference type="Rhea" id="RHEA:28094"/>
        <dbReference type="ChEBI" id="CHEBI:15377"/>
        <dbReference type="ChEBI" id="CHEBI:15378"/>
        <dbReference type="ChEBI" id="CHEBI:43474"/>
        <dbReference type="ChEBI" id="CHEBI:58405"/>
        <dbReference type="ChEBI" id="CHEBI:60392"/>
        <dbReference type="EC" id="3.6.1.27"/>
    </reaction>
</comment>
<comment type="subcellular location">
    <subcellularLocation>
        <location evidence="1">Cell inner membrane</location>
        <topology evidence="1">Multi-pass membrane protein</topology>
    </subcellularLocation>
</comment>
<comment type="miscellaneous">
    <text>Bacitracin is thought to be involved in the inhibition of peptidoglycan synthesis by sequestering undecaprenyl diphosphate, thereby reducing the pool of lipid carrier available.</text>
</comment>
<comment type="similarity">
    <text evidence="1">Belongs to the UppP family.</text>
</comment>
<organism>
    <name type="scientific">Erwinia tasmaniensis (strain DSM 17950 / CFBP 7177 / CIP 109463 / NCPPB 4357 / Et1/99)</name>
    <dbReference type="NCBI Taxonomy" id="465817"/>
    <lineage>
        <taxon>Bacteria</taxon>
        <taxon>Pseudomonadati</taxon>
        <taxon>Pseudomonadota</taxon>
        <taxon>Gammaproteobacteria</taxon>
        <taxon>Enterobacterales</taxon>
        <taxon>Erwiniaceae</taxon>
        <taxon>Erwinia</taxon>
    </lineage>
</organism>
<keyword id="KW-0046">Antibiotic resistance</keyword>
<keyword id="KW-0997">Cell inner membrane</keyword>
<keyword id="KW-1003">Cell membrane</keyword>
<keyword id="KW-0133">Cell shape</keyword>
<keyword id="KW-0961">Cell wall biogenesis/degradation</keyword>
<keyword id="KW-0378">Hydrolase</keyword>
<keyword id="KW-0472">Membrane</keyword>
<keyword id="KW-0573">Peptidoglycan synthesis</keyword>
<keyword id="KW-1185">Reference proteome</keyword>
<keyword id="KW-0812">Transmembrane</keyword>
<keyword id="KW-1133">Transmembrane helix</keyword>
<proteinExistence type="inferred from homology"/>
<evidence type="ECO:0000255" key="1">
    <source>
        <dbReference type="HAMAP-Rule" id="MF_01006"/>
    </source>
</evidence>
<sequence length="273" mass="29632">MTDIHQLWIAAILGLVEGLTEFLPVSSTGHMILVGHLLGFEGNKAETFEVVIQLGSILAVVVMFWRRLFGLIGIHFGEVPHEGSGQGRLTLIHILLGMVPAVVIGLLLHDQIKTLFNPVNVMYALVVGGVLLIAAELLKPKRPKSPGVDDITYRQAFMIGCFQCLALWPGFSRSGATISGGMLVGVSRYAASEFSFLLAVPMMIGATGLDLYKSMGFLSMADFPMFAVGFVTAFIVALIAIKSFLHIIKRISFIPFAIYRFIVAAAVYALFVL</sequence>